<name>YJBT_SHIBS</name>
<dbReference type="EMBL" id="CP000036">
    <property type="protein sequence ID" value="ABB68492.1"/>
    <property type="molecule type" value="Genomic_DNA"/>
</dbReference>
<dbReference type="RefSeq" id="WP_001295279.1">
    <property type="nucleotide sequence ID" value="NC_007613.1"/>
</dbReference>
<dbReference type="KEGG" id="sbo:SBO_4058"/>
<dbReference type="HOGENOM" id="CLU_2553093_0_0_6"/>
<dbReference type="Proteomes" id="UP000007067">
    <property type="component" value="Chromosome"/>
</dbReference>
<dbReference type="InterPro" id="IPR031382">
    <property type="entry name" value="YjbT"/>
</dbReference>
<dbReference type="Pfam" id="PF17089">
    <property type="entry name" value="YjbT"/>
    <property type="match status" value="1"/>
</dbReference>
<feature type="signal peptide" evidence="1">
    <location>
        <begin position="1"/>
        <end position="29"/>
    </location>
</feature>
<feature type="chain" id="PRO_0000311867" description="Uncharacterized protein YjbT">
    <location>
        <begin position="30"/>
        <end position="92"/>
    </location>
</feature>
<feature type="region of interest" description="Disordered" evidence="2">
    <location>
        <begin position="36"/>
        <end position="62"/>
    </location>
</feature>
<feature type="compositionally biased region" description="Polar residues" evidence="2">
    <location>
        <begin position="41"/>
        <end position="55"/>
    </location>
</feature>
<gene>
    <name type="primary">yjbT</name>
    <name type="ordered locus">SBO_4058</name>
</gene>
<organism>
    <name type="scientific">Shigella boydii serotype 4 (strain Sb227)</name>
    <dbReference type="NCBI Taxonomy" id="300268"/>
    <lineage>
        <taxon>Bacteria</taxon>
        <taxon>Pseudomonadati</taxon>
        <taxon>Pseudomonadota</taxon>
        <taxon>Gammaproteobacteria</taxon>
        <taxon>Enterobacterales</taxon>
        <taxon>Enterobacteriaceae</taxon>
        <taxon>Shigella</taxon>
    </lineage>
</organism>
<proteinExistence type="inferred from homology"/>
<sequence length="92" mass="10049">MKRNLIKVVKMKPYFAALMLSVSVLPAYAGPLGTADKADLPQSNVSSPMMAQSLRQPDLQPISTDRKTECFRLYTPDRKPGVNCVPDGSTGH</sequence>
<reference key="1">
    <citation type="journal article" date="2005" name="Nucleic Acids Res.">
        <title>Genome dynamics and diversity of Shigella species, the etiologic agents of bacillary dysentery.</title>
        <authorList>
            <person name="Yang F."/>
            <person name="Yang J."/>
            <person name="Zhang X."/>
            <person name="Chen L."/>
            <person name="Jiang Y."/>
            <person name="Yan Y."/>
            <person name="Tang X."/>
            <person name="Wang J."/>
            <person name="Xiong Z."/>
            <person name="Dong J."/>
            <person name="Xue Y."/>
            <person name="Zhu Y."/>
            <person name="Xu X."/>
            <person name="Sun L."/>
            <person name="Chen S."/>
            <person name="Nie H."/>
            <person name="Peng J."/>
            <person name="Xu J."/>
            <person name="Wang Y."/>
            <person name="Yuan Z."/>
            <person name="Wen Y."/>
            <person name="Yao Z."/>
            <person name="Shen Y."/>
            <person name="Qiang B."/>
            <person name="Hou Y."/>
            <person name="Yu J."/>
            <person name="Jin Q."/>
        </authorList>
    </citation>
    <scope>NUCLEOTIDE SEQUENCE [LARGE SCALE GENOMIC DNA]</scope>
    <source>
        <strain>Sb227</strain>
    </source>
</reference>
<keyword id="KW-0732">Signal</keyword>
<protein>
    <recommendedName>
        <fullName>Uncharacterized protein YjbT</fullName>
    </recommendedName>
</protein>
<accession>Q31TW6</accession>
<evidence type="ECO:0000255" key="1"/>
<evidence type="ECO:0000256" key="2">
    <source>
        <dbReference type="SAM" id="MobiDB-lite"/>
    </source>
</evidence>
<evidence type="ECO:0000305" key="3"/>
<comment type="similarity">
    <text evidence="3">Belongs to the YjbT family.</text>
</comment>